<gene>
    <name type="ORF">SCY_4673</name>
</gene>
<organism>
    <name type="scientific">Saccharomyces cerevisiae (strain YJM789)</name>
    <name type="common">Baker's yeast</name>
    <dbReference type="NCBI Taxonomy" id="307796"/>
    <lineage>
        <taxon>Eukaryota</taxon>
        <taxon>Fungi</taxon>
        <taxon>Dikarya</taxon>
        <taxon>Ascomycota</taxon>
        <taxon>Saccharomycotina</taxon>
        <taxon>Saccharomycetes</taxon>
        <taxon>Saccharomycetales</taxon>
        <taxon>Saccharomycetaceae</taxon>
        <taxon>Saccharomyces</taxon>
    </lineage>
</organism>
<comment type="subcellular location">
    <subcellularLocation>
        <location>Mitochondrion</location>
    </subcellularLocation>
</comment>
<comment type="similarity">
    <text evidence="2">Belongs to the bacterial ribosomal protein bL35 family.</text>
</comment>
<keyword id="KW-0496">Mitochondrion</keyword>
<keyword id="KW-0687">Ribonucleoprotein</keyword>
<keyword id="KW-0689">Ribosomal protein</keyword>
<accession>A6ZRW2</accession>
<accession>B0KZR4</accession>
<feature type="chain" id="PRO_0000378318" description="Large ribosomal subunit protein bL35m">
    <location>
        <begin position="1"/>
        <end position="115"/>
    </location>
</feature>
<sequence length="115" mass="13244">MKISLHNKRQRGDQNQNMSVFNVLKPLLKGSNSFKVKLNGFLFNNVSTITIRTLMKTHKGTAKRWRRTGNTFKRGIAGRKHGNIGWSHRSLKALTGRKIAHPAYSKHLKRLLPYH</sequence>
<evidence type="ECO:0000250" key="1">
    <source>
        <dbReference type="UniProtKB" id="P53921"/>
    </source>
</evidence>
<evidence type="ECO:0000305" key="2"/>
<dbReference type="EMBL" id="EF125227">
    <property type="protein sequence ID" value="ABN58635.1"/>
    <property type="molecule type" value="Genomic_DNA"/>
</dbReference>
<dbReference type="EMBL" id="AAFW02000067">
    <property type="protein sequence ID" value="EDN62694.1"/>
    <property type="molecule type" value="Genomic_DNA"/>
</dbReference>
<dbReference type="SMR" id="A6ZRW2"/>
<dbReference type="HOGENOM" id="CLU_166987_1_0_1"/>
<dbReference type="Proteomes" id="UP000007060">
    <property type="component" value="Unassembled WGS sequence"/>
</dbReference>
<dbReference type="GO" id="GO:0015934">
    <property type="term" value="C:large ribosomal subunit"/>
    <property type="evidence" value="ECO:0007669"/>
    <property type="project" value="TreeGrafter"/>
</dbReference>
<dbReference type="GO" id="GO:0005739">
    <property type="term" value="C:mitochondrion"/>
    <property type="evidence" value="ECO:0007669"/>
    <property type="project" value="UniProtKB-SubCell"/>
</dbReference>
<dbReference type="GO" id="GO:0003735">
    <property type="term" value="F:structural constituent of ribosome"/>
    <property type="evidence" value="ECO:0007669"/>
    <property type="project" value="InterPro"/>
</dbReference>
<dbReference type="GO" id="GO:0006412">
    <property type="term" value="P:translation"/>
    <property type="evidence" value="ECO:0007669"/>
    <property type="project" value="InterPro"/>
</dbReference>
<dbReference type="Gene3D" id="4.10.410.60">
    <property type="match status" value="1"/>
</dbReference>
<dbReference type="InterPro" id="IPR001706">
    <property type="entry name" value="Ribosomal_bL35"/>
</dbReference>
<dbReference type="InterPro" id="IPR021137">
    <property type="entry name" value="Ribosomal_bL35-like"/>
</dbReference>
<dbReference type="InterPro" id="IPR037229">
    <property type="entry name" value="Ribosomal_bL35_sf"/>
</dbReference>
<dbReference type="PANTHER" id="PTHR33343">
    <property type="entry name" value="54S RIBOSOMAL PROTEIN BL35M"/>
    <property type="match status" value="1"/>
</dbReference>
<dbReference type="PANTHER" id="PTHR33343:SF1">
    <property type="entry name" value="LARGE RIBOSOMAL SUBUNIT PROTEIN BL35M"/>
    <property type="match status" value="1"/>
</dbReference>
<dbReference type="Pfam" id="PF01632">
    <property type="entry name" value="Ribosomal_L35p"/>
    <property type="match status" value="1"/>
</dbReference>
<dbReference type="SUPFAM" id="SSF143034">
    <property type="entry name" value="L35p-like"/>
    <property type="match status" value="1"/>
</dbReference>
<name>YNM2_YEAS7</name>
<reference key="1">
    <citation type="journal article" date="2008" name="Genetics">
        <title>Sequential elimination of major-effect contributors identifies additional quantitative trait loci conditioning high-temperature growth in yeast.</title>
        <authorList>
            <person name="Sinha H."/>
            <person name="David L."/>
            <person name="Pascon R.C."/>
            <person name="Clauder-Muenster S."/>
            <person name="Krishnakumar S."/>
            <person name="Nguyen M."/>
            <person name="Shi G."/>
            <person name="Dean J."/>
            <person name="Davis R.W."/>
            <person name="Oefner P.J."/>
            <person name="McCusker J.H."/>
            <person name="Steinmetz L.M."/>
        </authorList>
    </citation>
    <scope>NUCLEOTIDE SEQUENCE [GENOMIC DNA]</scope>
</reference>
<reference key="2">
    <citation type="journal article" date="2007" name="Proc. Natl. Acad. Sci. U.S.A.">
        <title>Genome sequencing and comparative analysis of Saccharomyces cerevisiae strain YJM789.</title>
        <authorList>
            <person name="Wei W."/>
            <person name="McCusker J.H."/>
            <person name="Hyman R.W."/>
            <person name="Jones T."/>
            <person name="Ning Y."/>
            <person name="Cao Z."/>
            <person name="Gu Z."/>
            <person name="Bruno D."/>
            <person name="Miranda M."/>
            <person name="Nguyen M."/>
            <person name="Wilhelmy J."/>
            <person name="Komp C."/>
            <person name="Tamse R."/>
            <person name="Wang X."/>
            <person name="Jia P."/>
            <person name="Luedi P."/>
            <person name="Oefner P.J."/>
            <person name="David L."/>
            <person name="Dietrich F.S."/>
            <person name="Li Y."/>
            <person name="Davis R.W."/>
            <person name="Steinmetz L.M."/>
        </authorList>
    </citation>
    <scope>NUCLEOTIDE SEQUENCE [LARGE SCALE GENOMIC DNA]</scope>
    <source>
        <strain>YJM789</strain>
    </source>
</reference>
<proteinExistence type="inferred from homology"/>
<protein>
    <recommendedName>
        <fullName evidence="1">Large ribosomal subunit protein bL35m</fullName>
    </recommendedName>
    <alternativeName>
        <fullName>Mitochondrial ribosomal protein SCY_4673</fullName>
    </alternativeName>
</protein>